<organism>
    <name type="scientific">Stenotrophomonas maltophilia (strain R551-3)</name>
    <dbReference type="NCBI Taxonomy" id="391008"/>
    <lineage>
        <taxon>Bacteria</taxon>
        <taxon>Pseudomonadati</taxon>
        <taxon>Pseudomonadota</taxon>
        <taxon>Gammaproteobacteria</taxon>
        <taxon>Lysobacterales</taxon>
        <taxon>Lysobacteraceae</taxon>
        <taxon>Stenotrophomonas</taxon>
        <taxon>Stenotrophomonas maltophilia group</taxon>
    </lineage>
</organism>
<feature type="chain" id="PRO_1000200858" description="23S rRNA (uracil(1939)-C(5))-methyltransferase RlmD">
    <location>
        <begin position="1"/>
        <end position="444"/>
    </location>
</feature>
<feature type="domain" description="TRAM" evidence="1">
    <location>
        <begin position="5"/>
        <end position="67"/>
    </location>
</feature>
<feature type="active site" description="Nucleophile" evidence="1">
    <location>
        <position position="400"/>
    </location>
</feature>
<feature type="binding site" evidence="1">
    <location>
        <position position="80"/>
    </location>
    <ligand>
        <name>[4Fe-4S] cluster</name>
        <dbReference type="ChEBI" id="CHEBI:49883"/>
    </ligand>
</feature>
<feature type="binding site" evidence="1">
    <location>
        <position position="86"/>
    </location>
    <ligand>
        <name>[4Fe-4S] cluster</name>
        <dbReference type="ChEBI" id="CHEBI:49883"/>
    </ligand>
</feature>
<feature type="binding site" evidence="1">
    <location>
        <position position="89"/>
    </location>
    <ligand>
        <name>[4Fe-4S] cluster</name>
        <dbReference type="ChEBI" id="CHEBI:49883"/>
    </ligand>
</feature>
<feature type="binding site" evidence="1">
    <location>
        <position position="168"/>
    </location>
    <ligand>
        <name>[4Fe-4S] cluster</name>
        <dbReference type="ChEBI" id="CHEBI:49883"/>
    </ligand>
</feature>
<feature type="binding site" evidence="1">
    <location>
        <position position="276"/>
    </location>
    <ligand>
        <name>S-adenosyl-L-methionine</name>
        <dbReference type="ChEBI" id="CHEBI:59789"/>
    </ligand>
</feature>
<feature type="binding site" evidence="1">
    <location>
        <position position="305"/>
    </location>
    <ligand>
        <name>S-adenosyl-L-methionine</name>
        <dbReference type="ChEBI" id="CHEBI:59789"/>
    </ligand>
</feature>
<feature type="binding site" evidence="1">
    <location>
        <position position="310"/>
    </location>
    <ligand>
        <name>S-adenosyl-L-methionine</name>
        <dbReference type="ChEBI" id="CHEBI:59789"/>
    </ligand>
</feature>
<feature type="binding site" evidence="1">
    <location>
        <position position="326"/>
    </location>
    <ligand>
        <name>S-adenosyl-L-methionine</name>
        <dbReference type="ChEBI" id="CHEBI:59789"/>
    </ligand>
</feature>
<feature type="binding site" evidence="1">
    <location>
        <position position="353"/>
    </location>
    <ligand>
        <name>S-adenosyl-L-methionine</name>
        <dbReference type="ChEBI" id="CHEBI:59789"/>
    </ligand>
</feature>
<feature type="binding site" evidence="1">
    <location>
        <position position="374"/>
    </location>
    <ligand>
        <name>S-adenosyl-L-methionine</name>
        <dbReference type="ChEBI" id="CHEBI:59789"/>
    </ligand>
</feature>
<protein>
    <recommendedName>
        <fullName evidence="1">23S rRNA (uracil(1939)-C(5))-methyltransferase RlmD</fullName>
        <ecNumber evidence="1">2.1.1.190</ecNumber>
    </recommendedName>
    <alternativeName>
        <fullName evidence="1">23S rRNA(m5U1939)-methyltransferase</fullName>
    </alternativeName>
</protein>
<evidence type="ECO:0000255" key="1">
    <source>
        <dbReference type="HAMAP-Rule" id="MF_01010"/>
    </source>
</evidence>
<keyword id="KW-0004">4Fe-4S</keyword>
<keyword id="KW-0408">Iron</keyword>
<keyword id="KW-0411">Iron-sulfur</keyword>
<keyword id="KW-0479">Metal-binding</keyword>
<keyword id="KW-0489">Methyltransferase</keyword>
<keyword id="KW-0698">rRNA processing</keyword>
<keyword id="KW-0949">S-adenosyl-L-methionine</keyword>
<keyword id="KW-0808">Transferase</keyword>
<dbReference type="EC" id="2.1.1.190" evidence="1"/>
<dbReference type="EMBL" id="CP001111">
    <property type="protein sequence ID" value="ACF52670.1"/>
    <property type="molecule type" value="Genomic_DNA"/>
</dbReference>
<dbReference type="RefSeq" id="WP_012511805.1">
    <property type="nucleotide sequence ID" value="NC_011071.1"/>
</dbReference>
<dbReference type="SMR" id="B4SRK6"/>
<dbReference type="STRING" id="391008.Smal_2971"/>
<dbReference type="KEGG" id="smt:Smal_2971"/>
<dbReference type="eggNOG" id="COG2265">
    <property type="taxonomic scope" value="Bacteria"/>
</dbReference>
<dbReference type="HOGENOM" id="CLU_014689_8_2_6"/>
<dbReference type="OrthoDB" id="9804590at2"/>
<dbReference type="Proteomes" id="UP000001867">
    <property type="component" value="Chromosome"/>
</dbReference>
<dbReference type="GO" id="GO:0051539">
    <property type="term" value="F:4 iron, 4 sulfur cluster binding"/>
    <property type="evidence" value="ECO:0007669"/>
    <property type="project" value="UniProtKB-KW"/>
</dbReference>
<dbReference type="GO" id="GO:0005506">
    <property type="term" value="F:iron ion binding"/>
    <property type="evidence" value="ECO:0007669"/>
    <property type="project" value="UniProtKB-UniRule"/>
</dbReference>
<dbReference type="GO" id="GO:0003723">
    <property type="term" value="F:RNA binding"/>
    <property type="evidence" value="ECO:0007669"/>
    <property type="project" value="InterPro"/>
</dbReference>
<dbReference type="GO" id="GO:0070041">
    <property type="term" value="F:rRNA (uridine-C5-)-methyltransferase activity"/>
    <property type="evidence" value="ECO:0007669"/>
    <property type="project" value="UniProtKB-UniRule"/>
</dbReference>
<dbReference type="GO" id="GO:0070475">
    <property type="term" value="P:rRNA base methylation"/>
    <property type="evidence" value="ECO:0007669"/>
    <property type="project" value="TreeGrafter"/>
</dbReference>
<dbReference type="CDD" id="cd02440">
    <property type="entry name" value="AdoMet_MTases"/>
    <property type="match status" value="1"/>
</dbReference>
<dbReference type="FunFam" id="3.40.50.150:FF:000009">
    <property type="entry name" value="23S rRNA (Uracil(1939)-C(5))-methyltransferase RlmD"/>
    <property type="match status" value="1"/>
</dbReference>
<dbReference type="FunFam" id="2.40.50.140:FF:000097">
    <property type="entry name" value="23S rRNA (uracil(1939)-C(5))-methyltransferase RlmD"/>
    <property type="match status" value="1"/>
</dbReference>
<dbReference type="Gene3D" id="2.40.50.1070">
    <property type="match status" value="1"/>
</dbReference>
<dbReference type="Gene3D" id="2.40.50.140">
    <property type="entry name" value="Nucleic acid-binding proteins"/>
    <property type="match status" value="1"/>
</dbReference>
<dbReference type="Gene3D" id="3.40.50.150">
    <property type="entry name" value="Vaccinia Virus protein VP39"/>
    <property type="match status" value="1"/>
</dbReference>
<dbReference type="HAMAP" id="MF_01010">
    <property type="entry name" value="23SrRNA_methyltr_RlmD"/>
    <property type="match status" value="1"/>
</dbReference>
<dbReference type="InterPro" id="IPR001566">
    <property type="entry name" value="23S_rRNA_MeTrfase_RlmD"/>
</dbReference>
<dbReference type="InterPro" id="IPR030390">
    <property type="entry name" value="MeTrfase_TrmA_AS"/>
</dbReference>
<dbReference type="InterPro" id="IPR030391">
    <property type="entry name" value="MeTrfase_TrmA_CS"/>
</dbReference>
<dbReference type="InterPro" id="IPR012340">
    <property type="entry name" value="NA-bd_OB-fold"/>
</dbReference>
<dbReference type="InterPro" id="IPR029063">
    <property type="entry name" value="SAM-dependent_MTases_sf"/>
</dbReference>
<dbReference type="InterPro" id="IPR002792">
    <property type="entry name" value="TRAM_dom"/>
</dbReference>
<dbReference type="InterPro" id="IPR010280">
    <property type="entry name" value="U5_MeTrfase_fam"/>
</dbReference>
<dbReference type="NCBIfam" id="NF009639">
    <property type="entry name" value="PRK13168.1"/>
    <property type="match status" value="1"/>
</dbReference>
<dbReference type="NCBIfam" id="TIGR00479">
    <property type="entry name" value="rumA"/>
    <property type="match status" value="1"/>
</dbReference>
<dbReference type="PANTHER" id="PTHR11061:SF49">
    <property type="entry name" value="23S RRNA (URACIL(1939)-C(5))-METHYLTRANSFERASE RLMD"/>
    <property type="match status" value="1"/>
</dbReference>
<dbReference type="PANTHER" id="PTHR11061">
    <property type="entry name" value="RNA M5U METHYLTRANSFERASE"/>
    <property type="match status" value="1"/>
</dbReference>
<dbReference type="Pfam" id="PF05958">
    <property type="entry name" value="tRNA_U5-meth_tr"/>
    <property type="match status" value="1"/>
</dbReference>
<dbReference type="SUPFAM" id="SSF50249">
    <property type="entry name" value="Nucleic acid-binding proteins"/>
    <property type="match status" value="1"/>
</dbReference>
<dbReference type="SUPFAM" id="SSF53335">
    <property type="entry name" value="S-adenosyl-L-methionine-dependent methyltransferases"/>
    <property type="match status" value="1"/>
</dbReference>
<dbReference type="PROSITE" id="PS51687">
    <property type="entry name" value="SAM_MT_RNA_M5U"/>
    <property type="match status" value="1"/>
</dbReference>
<dbReference type="PROSITE" id="PS50926">
    <property type="entry name" value="TRAM"/>
    <property type="match status" value="1"/>
</dbReference>
<dbReference type="PROSITE" id="PS01230">
    <property type="entry name" value="TRMA_1"/>
    <property type="match status" value="1"/>
</dbReference>
<dbReference type="PROSITE" id="PS01231">
    <property type="entry name" value="TRMA_2"/>
    <property type="match status" value="1"/>
</dbReference>
<name>RLMD_STRM5</name>
<comment type="function">
    <text evidence="1">Catalyzes the formation of 5-methyl-uridine at position 1939 (m5U1939) in 23S rRNA.</text>
</comment>
<comment type="catalytic activity">
    <reaction evidence="1">
        <text>uridine(1939) in 23S rRNA + S-adenosyl-L-methionine = 5-methyluridine(1939) in 23S rRNA + S-adenosyl-L-homocysteine + H(+)</text>
        <dbReference type="Rhea" id="RHEA:42908"/>
        <dbReference type="Rhea" id="RHEA-COMP:10278"/>
        <dbReference type="Rhea" id="RHEA-COMP:10279"/>
        <dbReference type="ChEBI" id="CHEBI:15378"/>
        <dbReference type="ChEBI" id="CHEBI:57856"/>
        <dbReference type="ChEBI" id="CHEBI:59789"/>
        <dbReference type="ChEBI" id="CHEBI:65315"/>
        <dbReference type="ChEBI" id="CHEBI:74447"/>
        <dbReference type="EC" id="2.1.1.190"/>
    </reaction>
</comment>
<comment type="similarity">
    <text evidence="1">Belongs to the class I-like SAM-binding methyltransferase superfamily. RNA M5U methyltransferase family. RlmD subfamily.</text>
</comment>
<sequence length="444" mass="49223">MARSRSRIDRTPFQTEILDLSHDGRGVARREGEGGKVTFVSGALPGEVVMAEQTARSRHFDEARTVEVLKASPQRVTPKCPHFGTCAGCVLQHLDEDQQIVAKQRVLMDNLERIGHVKPGTVLAPLVGESWGYRRKGRFSVRRVEKKDKTLVGFREQDPRFVADLSQCLTVIPEIGTKVEALSTFIESLDGKRDIPQIEFIAGDQAVVLTVRHLQPLSDADRAAWATFGQQHGFVIYLQSGGVDTVQPLDGQGVPLSFRLAPWDVELAFRPLDFIQVNAKLNEKMIAHALDLLEPGEDERVLDLFCGLGNFTLPLARRVREVVGVEGDAGLVARARENAERNGLANAQFFSADLTQDQRSTAWMRQGFDKLLLDPPRSGAIEVLQQLPLKQFKRIVYVSCHPGSLARDAGYLVNEQGFTLVSAGAMDMFPHTAHVESIAVFEKR</sequence>
<accession>B4SRK6</accession>
<proteinExistence type="inferred from homology"/>
<gene>
    <name evidence="1" type="primary">rlmD</name>
    <name type="synonym">rumA</name>
    <name type="ordered locus">Smal_2971</name>
</gene>
<reference key="1">
    <citation type="submission" date="2008-06" db="EMBL/GenBank/DDBJ databases">
        <title>Complete sequence of Stenotrophomonas maltophilia R551-3.</title>
        <authorList>
            <consortium name="US DOE Joint Genome Institute"/>
            <person name="Lucas S."/>
            <person name="Copeland A."/>
            <person name="Lapidus A."/>
            <person name="Glavina del Rio T."/>
            <person name="Dalin E."/>
            <person name="Tice H."/>
            <person name="Pitluck S."/>
            <person name="Chain P."/>
            <person name="Malfatti S."/>
            <person name="Shin M."/>
            <person name="Vergez L."/>
            <person name="Lang D."/>
            <person name="Schmutz J."/>
            <person name="Larimer F."/>
            <person name="Land M."/>
            <person name="Hauser L."/>
            <person name="Kyrpides N."/>
            <person name="Mikhailova N."/>
            <person name="Taghavi S."/>
            <person name="Monchy S."/>
            <person name="Newman L."/>
            <person name="Vangronsveld J."/>
            <person name="van der Lelie D."/>
            <person name="Richardson P."/>
        </authorList>
    </citation>
    <scope>NUCLEOTIDE SEQUENCE [LARGE SCALE GENOMIC DNA]</scope>
    <source>
        <strain>R551-3</strain>
    </source>
</reference>